<proteinExistence type="inferred from homology"/>
<comment type="function">
    <text evidence="1">The RecF protein is involved in DNA metabolism; it is required for DNA replication and normal SOS inducibility. RecF binds preferentially to single-stranded, linear DNA. It also seems to bind ATP.</text>
</comment>
<comment type="subcellular location">
    <subcellularLocation>
        <location evidence="1">Cytoplasm</location>
    </subcellularLocation>
</comment>
<comment type="similarity">
    <text evidence="1">Belongs to the RecF family.</text>
</comment>
<feature type="chain" id="PRO_1000048555" description="DNA replication and repair protein RecF">
    <location>
        <begin position="1"/>
        <end position="369"/>
    </location>
</feature>
<feature type="binding site" evidence="1">
    <location>
        <begin position="30"/>
        <end position="37"/>
    </location>
    <ligand>
        <name>ATP</name>
        <dbReference type="ChEBI" id="CHEBI:30616"/>
    </ligand>
</feature>
<accession>A6UX64</accession>
<gene>
    <name evidence="1" type="primary">recF</name>
    <name type="ordered locus">PSPA7_0003</name>
</gene>
<protein>
    <recommendedName>
        <fullName evidence="1">DNA replication and repair protein RecF</fullName>
    </recommendedName>
</protein>
<keyword id="KW-0067">ATP-binding</keyword>
<keyword id="KW-0963">Cytoplasm</keyword>
<keyword id="KW-0227">DNA damage</keyword>
<keyword id="KW-0234">DNA repair</keyword>
<keyword id="KW-0235">DNA replication</keyword>
<keyword id="KW-0238">DNA-binding</keyword>
<keyword id="KW-0547">Nucleotide-binding</keyword>
<keyword id="KW-0742">SOS response</keyword>
<reference key="1">
    <citation type="submission" date="2007-06" db="EMBL/GenBank/DDBJ databases">
        <authorList>
            <person name="Dodson R.J."/>
            <person name="Harkins D."/>
            <person name="Paulsen I.T."/>
        </authorList>
    </citation>
    <scope>NUCLEOTIDE SEQUENCE [LARGE SCALE GENOMIC DNA]</scope>
    <source>
        <strain>DSM 24068 / PA7</strain>
    </source>
</reference>
<sequence>MSLTRVSVTAVRNLHPVTLSPSPRINILYGDNGSGKTSVLEAIHLLGLARSFRSARLQPVIQYEEAACTVFGQVMLANGIASNLGISRERQGEFTIRIDGQNARSAAQLAETLPLQLINPDSFRLLEGAPKIRRQFLDWGVFHVEPRFLPVWQRLQKALRQRNSWLRHGKLDPASQAAWDRELSLASDEIDAYRRSYIQALKPVFEETLAELVSLDDLTLSYYRGWDKDRDLQDVLASSLLRDQQMGHTQAGPQRADLRIRLAGHNAAEILSRGQQKLVVCALRIAQGHLINRAKRGQCVYLVDDLPSELDEQHRMALCRLLEDLGCQVFITCVDPQLLKDGWRTDTPVAMFHVEHGKVSQTTTIGSEA</sequence>
<organism>
    <name type="scientific">Pseudomonas paraeruginosa (strain DSM 24068 / PA7)</name>
    <name type="common">Pseudomonas aeruginosa (strain PA7)</name>
    <dbReference type="NCBI Taxonomy" id="381754"/>
    <lineage>
        <taxon>Bacteria</taxon>
        <taxon>Pseudomonadati</taxon>
        <taxon>Pseudomonadota</taxon>
        <taxon>Gammaproteobacteria</taxon>
        <taxon>Pseudomonadales</taxon>
        <taxon>Pseudomonadaceae</taxon>
        <taxon>Pseudomonas</taxon>
        <taxon>Pseudomonas paraeruginosa</taxon>
    </lineage>
</organism>
<name>RECF_PSEP7</name>
<evidence type="ECO:0000255" key="1">
    <source>
        <dbReference type="HAMAP-Rule" id="MF_00365"/>
    </source>
</evidence>
<dbReference type="EMBL" id="CP000744">
    <property type="protein sequence ID" value="ABR82369.1"/>
    <property type="molecule type" value="Genomic_DNA"/>
</dbReference>
<dbReference type="SMR" id="A6UX64"/>
<dbReference type="KEGG" id="pap:PSPA7_0003"/>
<dbReference type="HOGENOM" id="CLU_040267_0_0_6"/>
<dbReference type="Proteomes" id="UP000001582">
    <property type="component" value="Chromosome"/>
</dbReference>
<dbReference type="GO" id="GO:0005737">
    <property type="term" value="C:cytoplasm"/>
    <property type="evidence" value="ECO:0007669"/>
    <property type="project" value="UniProtKB-SubCell"/>
</dbReference>
<dbReference type="GO" id="GO:0005524">
    <property type="term" value="F:ATP binding"/>
    <property type="evidence" value="ECO:0007669"/>
    <property type="project" value="UniProtKB-UniRule"/>
</dbReference>
<dbReference type="GO" id="GO:0003697">
    <property type="term" value="F:single-stranded DNA binding"/>
    <property type="evidence" value="ECO:0007669"/>
    <property type="project" value="UniProtKB-UniRule"/>
</dbReference>
<dbReference type="GO" id="GO:0006260">
    <property type="term" value="P:DNA replication"/>
    <property type="evidence" value="ECO:0007669"/>
    <property type="project" value="UniProtKB-UniRule"/>
</dbReference>
<dbReference type="GO" id="GO:0000731">
    <property type="term" value="P:DNA synthesis involved in DNA repair"/>
    <property type="evidence" value="ECO:0007669"/>
    <property type="project" value="TreeGrafter"/>
</dbReference>
<dbReference type="GO" id="GO:0006302">
    <property type="term" value="P:double-strand break repair"/>
    <property type="evidence" value="ECO:0007669"/>
    <property type="project" value="TreeGrafter"/>
</dbReference>
<dbReference type="GO" id="GO:0009432">
    <property type="term" value="P:SOS response"/>
    <property type="evidence" value="ECO:0007669"/>
    <property type="project" value="UniProtKB-UniRule"/>
</dbReference>
<dbReference type="Gene3D" id="3.40.50.300">
    <property type="entry name" value="P-loop containing nucleotide triphosphate hydrolases"/>
    <property type="match status" value="1"/>
</dbReference>
<dbReference type="Gene3D" id="1.20.1050.90">
    <property type="entry name" value="RecF/RecN/SMC, N-terminal domain"/>
    <property type="match status" value="1"/>
</dbReference>
<dbReference type="HAMAP" id="MF_00365">
    <property type="entry name" value="RecF"/>
    <property type="match status" value="1"/>
</dbReference>
<dbReference type="InterPro" id="IPR001238">
    <property type="entry name" value="DNA-binding_RecF"/>
</dbReference>
<dbReference type="InterPro" id="IPR018078">
    <property type="entry name" value="DNA-binding_RecF_CS"/>
</dbReference>
<dbReference type="InterPro" id="IPR027417">
    <property type="entry name" value="P-loop_NTPase"/>
</dbReference>
<dbReference type="InterPro" id="IPR003395">
    <property type="entry name" value="RecF/RecN/SMC_N"/>
</dbReference>
<dbReference type="InterPro" id="IPR042174">
    <property type="entry name" value="RecF_2"/>
</dbReference>
<dbReference type="NCBIfam" id="TIGR00611">
    <property type="entry name" value="recf"/>
    <property type="match status" value="1"/>
</dbReference>
<dbReference type="PANTHER" id="PTHR32182">
    <property type="entry name" value="DNA REPLICATION AND REPAIR PROTEIN RECF"/>
    <property type="match status" value="1"/>
</dbReference>
<dbReference type="PANTHER" id="PTHR32182:SF0">
    <property type="entry name" value="DNA REPLICATION AND REPAIR PROTEIN RECF"/>
    <property type="match status" value="1"/>
</dbReference>
<dbReference type="Pfam" id="PF02463">
    <property type="entry name" value="SMC_N"/>
    <property type="match status" value="1"/>
</dbReference>
<dbReference type="SUPFAM" id="SSF52540">
    <property type="entry name" value="P-loop containing nucleoside triphosphate hydrolases"/>
    <property type="match status" value="1"/>
</dbReference>
<dbReference type="PROSITE" id="PS00617">
    <property type="entry name" value="RECF_1"/>
    <property type="match status" value="1"/>
</dbReference>
<dbReference type="PROSITE" id="PS00618">
    <property type="entry name" value="RECF_2"/>
    <property type="match status" value="1"/>
</dbReference>